<dbReference type="EMBL" id="CU928163">
    <property type="protein sequence ID" value="CAR12441.1"/>
    <property type="molecule type" value="Genomic_DNA"/>
</dbReference>
<dbReference type="RefSeq" id="WP_000749258.1">
    <property type="nucleotide sequence ID" value="NC_011751.1"/>
</dbReference>
<dbReference type="RefSeq" id="YP_002411984.1">
    <property type="nucleotide sequence ID" value="NC_011751.1"/>
</dbReference>
<dbReference type="SMR" id="B7NAT2"/>
<dbReference type="STRING" id="585056.ECUMN_1231"/>
<dbReference type="KEGG" id="eum:ECUMN_1231"/>
<dbReference type="PATRIC" id="fig|585056.7.peg.1433"/>
<dbReference type="HOGENOM" id="CLU_071003_1_2_6"/>
<dbReference type="Proteomes" id="UP000007097">
    <property type="component" value="Chromosome"/>
</dbReference>
<dbReference type="GO" id="GO:0042597">
    <property type="term" value="C:periplasmic space"/>
    <property type="evidence" value="ECO:0007669"/>
    <property type="project" value="UniProtKB-SubCell"/>
</dbReference>
<dbReference type="Gene3D" id="2.40.128.110">
    <property type="entry name" value="Lipid/polyisoprenoid-binding, YceI-like"/>
    <property type="match status" value="1"/>
</dbReference>
<dbReference type="HAMAP" id="MF_00780">
    <property type="entry name" value="UPF0312"/>
    <property type="match status" value="1"/>
</dbReference>
<dbReference type="InterPro" id="IPR007372">
    <property type="entry name" value="Lipid/polyisoprenoid-bd_YceI"/>
</dbReference>
<dbReference type="InterPro" id="IPR036761">
    <property type="entry name" value="TTHA0802/YceI-like_sf"/>
</dbReference>
<dbReference type="InterPro" id="IPR023480">
    <property type="entry name" value="UPF0312/YceI"/>
</dbReference>
<dbReference type="NCBIfam" id="NF002994">
    <property type="entry name" value="PRK03757.1"/>
    <property type="match status" value="1"/>
</dbReference>
<dbReference type="PANTHER" id="PTHR34406">
    <property type="entry name" value="PROTEIN YCEI"/>
    <property type="match status" value="1"/>
</dbReference>
<dbReference type="PANTHER" id="PTHR34406:SF1">
    <property type="entry name" value="PROTEIN YCEI"/>
    <property type="match status" value="1"/>
</dbReference>
<dbReference type="Pfam" id="PF04264">
    <property type="entry name" value="YceI"/>
    <property type="match status" value="1"/>
</dbReference>
<dbReference type="SMART" id="SM00867">
    <property type="entry name" value="YceI"/>
    <property type="match status" value="1"/>
</dbReference>
<dbReference type="SUPFAM" id="SSF101874">
    <property type="entry name" value="YceI-like"/>
    <property type="match status" value="1"/>
</dbReference>
<name>YCEI_ECOLU</name>
<protein>
    <recommendedName>
        <fullName evidence="1">Protein YceI</fullName>
    </recommendedName>
</protein>
<keyword id="KW-0574">Periplasm</keyword>
<keyword id="KW-0732">Signal</keyword>
<reference key="1">
    <citation type="journal article" date="2009" name="PLoS Genet.">
        <title>Organised genome dynamics in the Escherichia coli species results in highly diverse adaptive paths.</title>
        <authorList>
            <person name="Touchon M."/>
            <person name="Hoede C."/>
            <person name="Tenaillon O."/>
            <person name="Barbe V."/>
            <person name="Baeriswyl S."/>
            <person name="Bidet P."/>
            <person name="Bingen E."/>
            <person name="Bonacorsi S."/>
            <person name="Bouchier C."/>
            <person name="Bouvet O."/>
            <person name="Calteau A."/>
            <person name="Chiapello H."/>
            <person name="Clermont O."/>
            <person name="Cruveiller S."/>
            <person name="Danchin A."/>
            <person name="Diard M."/>
            <person name="Dossat C."/>
            <person name="Karoui M.E."/>
            <person name="Frapy E."/>
            <person name="Garry L."/>
            <person name="Ghigo J.M."/>
            <person name="Gilles A.M."/>
            <person name="Johnson J."/>
            <person name="Le Bouguenec C."/>
            <person name="Lescat M."/>
            <person name="Mangenot S."/>
            <person name="Martinez-Jehanne V."/>
            <person name="Matic I."/>
            <person name="Nassif X."/>
            <person name="Oztas S."/>
            <person name="Petit M.A."/>
            <person name="Pichon C."/>
            <person name="Rouy Z."/>
            <person name="Ruf C.S."/>
            <person name="Schneider D."/>
            <person name="Tourret J."/>
            <person name="Vacherie B."/>
            <person name="Vallenet D."/>
            <person name="Medigue C."/>
            <person name="Rocha E.P.C."/>
            <person name="Denamur E."/>
        </authorList>
    </citation>
    <scope>NUCLEOTIDE SEQUENCE [LARGE SCALE GENOMIC DNA]</scope>
    <source>
        <strain>UMN026 / ExPEC</strain>
    </source>
</reference>
<feature type="signal peptide" evidence="1">
    <location>
        <begin position="1"/>
        <end position="22"/>
    </location>
</feature>
<feature type="chain" id="PRO_1000200474" description="Protein YceI">
    <location>
        <begin position="23"/>
        <end position="191"/>
    </location>
</feature>
<organism>
    <name type="scientific">Escherichia coli O17:K52:H18 (strain UMN026 / ExPEC)</name>
    <dbReference type="NCBI Taxonomy" id="585056"/>
    <lineage>
        <taxon>Bacteria</taxon>
        <taxon>Pseudomonadati</taxon>
        <taxon>Pseudomonadota</taxon>
        <taxon>Gammaproteobacteria</taxon>
        <taxon>Enterobacterales</taxon>
        <taxon>Enterobacteriaceae</taxon>
        <taxon>Escherichia</taxon>
    </lineage>
</organism>
<gene>
    <name evidence="1" type="primary">yceI</name>
    <name type="ordered locus">ECUMN_1231</name>
</gene>
<evidence type="ECO:0000255" key="1">
    <source>
        <dbReference type="HAMAP-Rule" id="MF_00780"/>
    </source>
</evidence>
<sequence>MKKSLLGLTFASLMFSAGSAVAADYKIDKEGQHAFVNFRIQHLGYSWLYGTFKDFDGTFTFDEKNPAADKVNVTINTTSVDTNHAERDKHLRSADFLNTAKYPQATFTSTSVKKDGDDLDITGDLTLNGVTKPVTLEAKLIGQGDDPWGGKRAGFEAEGKIKLKDFNIKTDLGPASQEVDLIISVEGVQQK</sequence>
<comment type="subcellular location">
    <subcellularLocation>
        <location evidence="1">Periplasm</location>
    </subcellularLocation>
</comment>
<comment type="similarity">
    <text evidence="1">Belongs to the UPF0312 family. Type 1 subfamily.</text>
</comment>
<proteinExistence type="inferred from homology"/>
<accession>B7NAT2</accession>